<sequence length="431" mass="48423">MKNLVEELKWRGLYHDSMPGTEEQLLKEVTSAYIGFDPTADSLHIGSMVQIILLVHLKNFGHQPIALVGGATGMIGDPSGKSDERNLLNEETLAKNVAGIKSVLSRFLDFNSKEQNAPIMVNNYDWMKEFSFIDFAREVGKRITVNYMMAKDSVKKRINGEGEGMSFTEFTYQLIQGYDFYHLYKNNNCLLQMGGSDQWGNITTGTELVRRMGGENAKAFALTTPLITKADGSKFGKSEGGNVWLDADKTSVYKFYQFWVNATDADAEKYIKIFTFLDKETIDALIAEHQTAPHLRILQKKLAEEITIFVHSKEELEKAIQASNILFGNSTADDLKKLDEKTFLEVFDGVPQAEIAKADLENGLDIVTVLNEKTGFFKSNGEARRALTANSISVNREKIKEDFVLTANDLINNQFVLLQSGKKNYFVIRVV</sequence>
<gene>
    <name evidence="1" type="primary">tyrS</name>
    <name type="ordered locus">Fjoh_0550</name>
</gene>
<evidence type="ECO:0000255" key="1">
    <source>
        <dbReference type="HAMAP-Rule" id="MF_02006"/>
    </source>
</evidence>
<dbReference type="EC" id="6.1.1.1" evidence="1"/>
<dbReference type="EMBL" id="CP000685">
    <property type="protein sequence ID" value="ABQ03585.1"/>
    <property type="molecule type" value="Genomic_DNA"/>
</dbReference>
<dbReference type="RefSeq" id="WP_012022641.1">
    <property type="nucleotide sequence ID" value="NC_009441.1"/>
</dbReference>
<dbReference type="SMR" id="A5FMI1"/>
<dbReference type="STRING" id="376686.Fjoh_0550"/>
<dbReference type="KEGG" id="fjo:Fjoh_0550"/>
<dbReference type="eggNOG" id="COG0162">
    <property type="taxonomic scope" value="Bacteria"/>
</dbReference>
<dbReference type="HOGENOM" id="CLU_024003_0_3_10"/>
<dbReference type="OrthoDB" id="9804243at2"/>
<dbReference type="Proteomes" id="UP000006694">
    <property type="component" value="Chromosome"/>
</dbReference>
<dbReference type="GO" id="GO:0005829">
    <property type="term" value="C:cytosol"/>
    <property type="evidence" value="ECO:0007669"/>
    <property type="project" value="TreeGrafter"/>
</dbReference>
<dbReference type="GO" id="GO:0005524">
    <property type="term" value="F:ATP binding"/>
    <property type="evidence" value="ECO:0007669"/>
    <property type="project" value="UniProtKB-UniRule"/>
</dbReference>
<dbReference type="GO" id="GO:0003723">
    <property type="term" value="F:RNA binding"/>
    <property type="evidence" value="ECO:0007669"/>
    <property type="project" value="UniProtKB-KW"/>
</dbReference>
<dbReference type="GO" id="GO:0004831">
    <property type="term" value="F:tyrosine-tRNA ligase activity"/>
    <property type="evidence" value="ECO:0007669"/>
    <property type="project" value="UniProtKB-UniRule"/>
</dbReference>
<dbReference type="GO" id="GO:0006437">
    <property type="term" value="P:tyrosyl-tRNA aminoacylation"/>
    <property type="evidence" value="ECO:0007669"/>
    <property type="project" value="UniProtKB-UniRule"/>
</dbReference>
<dbReference type="CDD" id="cd00805">
    <property type="entry name" value="TyrRS_core"/>
    <property type="match status" value="1"/>
</dbReference>
<dbReference type="FunFam" id="1.10.240.10:FF:000001">
    <property type="entry name" value="Tyrosine--tRNA ligase"/>
    <property type="match status" value="1"/>
</dbReference>
<dbReference type="FunFam" id="3.40.50.620:FF:000008">
    <property type="entry name" value="Tyrosine--tRNA ligase"/>
    <property type="match status" value="1"/>
</dbReference>
<dbReference type="Gene3D" id="3.40.50.620">
    <property type="entry name" value="HUPs"/>
    <property type="match status" value="1"/>
</dbReference>
<dbReference type="Gene3D" id="3.10.290.10">
    <property type="entry name" value="RNA-binding S4 domain"/>
    <property type="match status" value="1"/>
</dbReference>
<dbReference type="Gene3D" id="1.10.240.10">
    <property type="entry name" value="Tyrosyl-Transfer RNA Synthetase"/>
    <property type="match status" value="1"/>
</dbReference>
<dbReference type="HAMAP" id="MF_02006">
    <property type="entry name" value="Tyr_tRNA_synth_type1"/>
    <property type="match status" value="1"/>
</dbReference>
<dbReference type="InterPro" id="IPR002305">
    <property type="entry name" value="aa-tRNA-synth_Ic"/>
</dbReference>
<dbReference type="InterPro" id="IPR014729">
    <property type="entry name" value="Rossmann-like_a/b/a_fold"/>
</dbReference>
<dbReference type="InterPro" id="IPR036986">
    <property type="entry name" value="S4_RNA-bd_sf"/>
</dbReference>
<dbReference type="InterPro" id="IPR054608">
    <property type="entry name" value="SYY-like_C"/>
</dbReference>
<dbReference type="InterPro" id="IPR002307">
    <property type="entry name" value="Tyr-tRNA-ligase"/>
</dbReference>
<dbReference type="InterPro" id="IPR024088">
    <property type="entry name" value="Tyr-tRNA-ligase_bac-type"/>
</dbReference>
<dbReference type="InterPro" id="IPR024107">
    <property type="entry name" value="Tyr-tRNA-ligase_bac_1"/>
</dbReference>
<dbReference type="NCBIfam" id="TIGR00234">
    <property type="entry name" value="tyrS"/>
    <property type="match status" value="1"/>
</dbReference>
<dbReference type="PANTHER" id="PTHR11766:SF0">
    <property type="entry name" value="TYROSINE--TRNA LIGASE, MITOCHONDRIAL"/>
    <property type="match status" value="1"/>
</dbReference>
<dbReference type="PANTHER" id="PTHR11766">
    <property type="entry name" value="TYROSYL-TRNA SYNTHETASE"/>
    <property type="match status" value="1"/>
</dbReference>
<dbReference type="Pfam" id="PF22421">
    <property type="entry name" value="SYY_C-terminal"/>
    <property type="match status" value="1"/>
</dbReference>
<dbReference type="Pfam" id="PF00579">
    <property type="entry name" value="tRNA-synt_1b"/>
    <property type="match status" value="1"/>
</dbReference>
<dbReference type="PRINTS" id="PR01040">
    <property type="entry name" value="TRNASYNTHTYR"/>
</dbReference>
<dbReference type="SUPFAM" id="SSF55174">
    <property type="entry name" value="Alpha-L RNA-binding motif"/>
    <property type="match status" value="1"/>
</dbReference>
<dbReference type="SUPFAM" id="SSF52374">
    <property type="entry name" value="Nucleotidylyl transferase"/>
    <property type="match status" value="1"/>
</dbReference>
<dbReference type="PROSITE" id="PS50889">
    <property type="entry name" value="S4"/>
    <property type="match status" value="1"/>
</dbReference>
<proteinExistence type="inferred from homology"/>
<comment type="function">
    <text evidence="1">Catalyzes the attachment of tyrosine to tRNA(Tyr) in a two-step reaction: tyrosine is first activated by ATP to form Tyr-AMP and then transferred to the acceptor end of tRNA(Tyr).</text>
</comment>
<comment type="catalytic activity">
    <reaction evidence="1">
        <text>tRNA(Tyr) + L-tyrosine + ATP = L-tyrosyl-tRNA(Tyr) + AMP + diphosphate + H(+)</text>
        <dbReference type="Rhea" id="RHEA:10220"/>
        <dbReference type="Rhea" id="RHEA-COMP:9706"/>
        <dbReference type="Rhea" id="RHEA-COMP:9707"/>
        <dbReference type="ChEBI" id="CHEBI:15378"/>
        <dbReference type="ChEBI" id="CHEBI:30616"/>
        <dbReference type="ChEBI" id="CHEBI:33019"/>
        <dbReference type="ChEBI" id="CHEBI:58315"/>
        <dbReference type="ChEBI" id="CHEBI:78442"/>
        <dbReference type="ChEBI" id="CHEBI:78536"/>
        <dbReference type="ChEBI" id="CHEBI:456215"/>
        <dbReference type="EC" id="6.1.1.1"/>
    </reaction>
</comment>
<comment type="subunit">
    <text evidence="1">Homodimer.</text>
</comment>
<comment type="subcellular location">
    <subcellularLocation>
        <location evidence="1">Cytoplasm</location>
    </subcellularLocation>
</comment>
<comment type="similarity">
    <text evidence="1">Belongs to the class-I aminoacyl-tRNA synthetase family. TyrS type 1 subfamily.</text>
</comment>
<protein>
    <recommendedName>
        <fullName evidence="1">Tyrosine--tRNA ligase</fullName>
        <ecNumber evidence="1">6.1.1.1</ecNumber>
    </recommendedName>
    <alternativeName>
        <fullName evidence="1">Tyrosyl-tRNA synthetase</fullName>
        <shortName evidence="1">TyrRS</shortName>
    </alternativeName>
</protein>
<accession>A5FMI1</accession>
<reference key="1">
    <citation type="journal article" date="2009" name="Appl. Environ. Microbiol.">
        <title>Novel features of the polysaccharide-digesting gliding bacterium Flavobacterium johnsoniae as revealed by genome sequence analysis.</title>
        <authorList>
            <person name="McBride M.J."/>
            <person name="Xie G."/>
            <person name="Martens E.C."/>
            <person name="Lapidus A."/>
            <person name="Henrissat B."/>
            <person name="Rhodes R.G."/>
            <person name="Goltsman E."/>
            <person name="Wang W."/>
            <person name="Xu J."/>
            <person name="Hunnicutt D.W."/>
            <person name="Staroscik A.M."/>
            <person name="Hoover T.R."/>
            <person name="Cheng Y.Q."/>
            <person name="Stein J.L."/>
        </authorList>
    </citation>
    <scope>NUCLEOTIDE SEQUENCE [LARGE SCALE GENOMIC DNA]</scope>
    <source>
        <strain>ATCC 17061 / DSM 2064 / JCM 8514 / BCRC 14874 / CCUG 350202 / NBRC 14942 / NCIMB 11054 / UW101</strain>
    </source>
</reference>
<keyword id="KW-0030">Aminoacyl-tRNA synthetase</keyword>
<keyword id="KW-0067">ATP-binding</keyword>
<keyword id="KW-0963">Cytoplasm</keyword>
<keyword id="KW-0436">Ligase</keyword>
<keyword id="KW-0547">Nucleotide-binding</keyword>
<keyword id="KW-0648">Protein biosynthesis</keyword>
<keyword id="KW-0694">RNA-binding</keyword>
<name>SYY_FLAJ1</name>
<organism>
    <name type="scientific">Flavobacterium johnsoniae (strain ATCC 17061 / DSM 2064 / JCM 8514 / BCRC 14874 / CCUG 350202 / NBRC 14942 / NCIMB 11054 / UW101)</name>
    <name type="common">Cytophaga johnsonae</name>
    <dbReference type="NCBI Taxonomy" id="376686"/>
    <lineage>
        <taxon>Bacteria</taxon>
        <taxon>Pseudomonadati</taxon>
        <taxon>Bacteroidota</taxon>
        <taxon>Flavobacteriia</taxon>
        <taxon>Flavobacteriales</taxon>
        <taxon>Flavobacteriaceae</taxon>
        <taxon>Flavobacterium</taxon>
    </lineage>
</organism>
<feature type="chain" id="PRO_1000216273" description="Tyrosine--tRNA ligase">
    <location>
        <begin position="1"/>
        <end position="431"/>
    </location>
</feature>
<feature type="domain" description="S4 RNA-binding" evidence="1">
    <location>
        <begin position="364"/>
        <end position="431"/>
    </location>
</feature>
<feature type="short sequence motif" description="'HIGH' region">
    <location>
        <begin position="38"/>
        <end position="47"/>
    </location>
</feature>
<feature type="short sequence motif" description="'KMSKS' region">
    <location>
        <begin position="234"/>
        <end position="238"/>
    </location>
</feature>
<feature type="binding site" evidence="1">
    <location>
        <position position="33"/>
    </location>
    <ligand>
        <name>L-tyrosine</name>
        <dbReference type="ChEBI" id="CHEBI:58315"/>
    </ligand>
</feature>
<feature type="binding site" evidence="1">
    <location>
        <position position="172"/>
    </location>
    <ligand>
        <name>L-tyrosine</name>
        <dbReference type="ChEBI" id="CHEBI:58315"/>
    </ligand>
</feature>
<feature type="binding site" evidence="1">
    <location>
        <position position="176"/>
    </location>
    <ligand>
        <name>L-tyrosine</name>
        <dbReference type="ChEBI" id="CHEBI:58315"/>
    </ligand>
</feature>
<feature type="binding site" evidence="1">
    <location>
        <position position="237"/>
    </location>
    <ligand>
        <name>ATP</name>
        <dbReference type="ChEBI" id="CHEBI:30616"/>
    </ligand>
</feature>